<proteinExistence type="inferred from homology"/>
<sequence length="96" mass="11098">MHVTLVEINVKEDKVDQFIEVFRANHLGSIREAGNLRFDVLRDEHIPTRFYIYEAYTDEAAVAIHKTTPHYLQCVEQLAPLMTGPRKKTVFIGLMP</sequence>
<dbReference type="EC" id="5.3.1.32" evidence="1"/>
<dbReference type="EMBL" id="CP000720">
    <property type="protein sequence ID" value="ABS48436.1"/>
    <property type="molecule type" value="Genomic_DNA"/>
</dbReference>
<dbReference type="RefSeq" id="WP_002209186.1">
    <property type="nucleotide sequence ID" value="NC_009708.1"/>
</dbReference>
<dbReference type="SMR" id="A7FMK2"/>
<dbReference type="GeneID" id="96664050"/>
<dbReference type="KEGG" id="ypi:YpsIP31758_3526"/>
<dbReference type="HOGENOM" id="CLU_131496_3_0_6"/>
<dbReference type="Proteomes" id="UP000002412">
    <property type="component" value="Chromosome"/>
</dbReference>
<dbReference type="GO" id="GO:0005829">
    <property type="term" value="C:cytosol"/>
    <property type="evidence" value="ECO:0007669"/>
    <property type="project" value="TreeGrafter"/>
</dbReference>
<dbReference type="GO" id="GO:0002952">
    <property type="term" value="F:(4S)-4-hydroxy-5-phosphonooxypentane-2,3-dione isomerase activity"/>
    <property type="evidence" value="ECO:0007669"/>
    <property type="project" value="UniProtKB-EC"/>
</dbReference>
<dbReference type="GO" id="GO:0016491">
    <property type="term" value="F:oxidoreductase activity"/>
    <property type="evidence" value="ECO:0007669"/>
    <property type="project" value="TreeGrafter"/>
</dbReference>
<dbReference type="FunFam" id="3.30.70.100:FF:000016">
    <property type="entry name" value="(4S)-4-hydroxy-5-phosphonooxypentane-2,3-dione isomerase"/>
    <property type="match status" value="1"/>
</dbReference>
<dbReference type="Gene3D" id="3.30.70.100">
    <property type="match status" value="1"/>
</dbReference>
<dbReference type="HAMAP" id="MF_02051">
    <property type="entry name" value="LsrG"/>
    <property type="match status" value="1"/>
</dbReference>
<dbReference type="InterPro" id="IPR007138">
    <property type="entry name" value="ABM_dom"/>
</dbReference>
<dbReference type="InterPro" id="IPR050744">
    <property type="entry name" value="AI-2_Isomerase_LsrG"/>
</dbReference>
<dbReference type="InterPro" id="IPR011008">
    <property type="entry name" value="Dimeric_a/b-barrel"/>
</dbReference>
<dbReference type="InterPro" id="IPR033672">
    <property type="entry name" value="LsrG"/>
</dbReference>
<dbReference type="NCBIfam" id="NF007791">
    <property type="entry name" value="PRK10486.1"/>
    <property type="match status" value="1"/>
</dbReference>
<dbReference type="PANTHER" id="PTHR33336:SF1">
    <property type="entry name" value="(4S)-4-HYDROXY-5-PHOSPHONOOXYPENTANE-2,3-DIONE ISOMERASE"/>
    <property type="match status" value="1"/>
</dbReference>
<dbReference type="PANTHER" id="PTHR33336">
    <property type="entry name" value="QUINOL MONOOXYGENASE YGIN-RELATED"/>
    <property type="match status" value="1"/>
</dbReference>
<dbReference type="Pfam" id="PF03992">
    <property type="entry name" value="ABM"/>
    <property type="match status" value="1"/>
</dbReference>
<dbReference type="SUPFAM" id="SSF54909">
    <property type="entry name" value="Dimeric alpha+beta barrel"/>
    <property type="match status" value="1"/>
</dbReference>
<dbReference type="PROSITE" id="PS51725">
    <property type="entry name" value="ABM"/>
    <property type="match status" value="1"/>
</dbReference>
<keyword id="KW-0963">Cytoplasm</keyword>
<keyword id="KW-0413">Isomerase</keyword>
<organism>
    <name type="scientific">Yersinia pseudotuberculosis serotype O:1b (strain IP 31758)</name>
    <dbReference type="NCBI Taxonomy" id="349747"/>
    <lineage>
        <taxon>Bacteria</taxon>
        <taxon>Pseudomonadati</taxon>
        <taxon>Pseudomonadota</taxon>
        <taxon>Gammaproteobacteria</taxon>
        <taxon>Enterobacterales</taxon>
        <taxon>Yersiniaceae</taxon>
        <taxon>Yersinia</taxon>
    </lineage>
</organism>
<evidence type="ECO:0000255" key="1">
    <source>
        <dbReference type="HAMAP-Rule" id="MF_02051"/>
    </source>
</evidence>
<accession>A7FMK2</accession>
<gene>
    <name evidence="1" type="primary">lsrG</name>
    <name type="ordered locus">YpsIP31758_3526</name>
</gene>
<name>LSRG_YERP3</name>
<feature type="chain" id="PRO_0000351584" description="(4S)-4-hydroxy-5-phosphonooxypentane-2,3-dione isomerase">
    <location>
        <begin position="1"/>
        <end position="96"/>
    </location>
</feature>
<feature type="domain" description="ABM" evidence="1">
    <location>
        <begin position="2"/>
        <end position="91"/>
    </location>
</feature>
<reference key="1">
    <citation type="journal article" date="2007" name="PLoS Genet.">
        <title>The complete genome sequence of Yersinia pseudotuberculosis IP31758, the causative agent of Far East scarlet-like fever.</title>
        <authorList>
            <person name="Eppinger M."/>
            <person name="Rosovitz M.J."/>
            <person name="Fricke W.F."/>
            <person name="Rasko D.A."/>
            <person name="Kokorina G."/>
            <person name="Fayolle C."/>
            <person name="Lindler L.E."/>
            <person name="Carniel E."/>
            <person name="Ravel J."/>
        </authorList>
    </citation>
    <scope>NUCLEOTIDE SEQUENCE [LARGE SCALE GENOMIC DNA]</scope>
    <source>
        <strain>IP 31758</strain>
    </source>
</reference>
<comment type="function">
    <text evidence="1">Involved in the degradation of phospho-AI-2, thereby terminating induction of the lsr operon and closing the AI-2 signaling cycle. Catalyzes the conversion of (4S)-4-hydroxy-5-phosphonooxypentane-2,3-dione (P-DPD) to 3-hydroxy-5-phosphonooxypentane-2,4-dione (P-HPD).</text>
</comment>
<comment type="catalytic activity">
    <reaction evidence="1">
        <text>(2S)-2-hydroxy-3,4-dioxopentyl phosphate = 3-hydroxy-2,4-dioxopentyl phosphate</text>
        <dbReference type="Rhea" id="RHEA:44360"/>
        <dbReference type="ChEBI" id="CHEBI:71677"/>
        <dbReference type="ChEBI" id="CHEBI:84359"/>
        <dbReference type="EC" id="5.3.1.32"/>
    </reaction>
</comment>
<comment type="subunit">
    <text evidence="1">Homodimer.</text>
</comment>
<comment type="subcellular location">
    <subcellularLocation>
        <location evidence="1">Cytoplasm</location>
    </subcellularLocation>
</comment>
<comment type="similarity">
    <text evidence="1">Belongs to the LsrG family.</text>
</comment>
<protein>
    <recommendedName>
        <fullName evidence="1">(4S)-4-hydroxy-5-phosphonooxypentane-2,3-dione isomerase</fullName>
        <ecNumber evidence="1">5.3.1.32</ecNumber>
    </recommendedName>
    <alternativeName>
        <fullName evidence="1">Autoinducer 2-degrading protein LsrG</fullName>
        <shortName evidence="1">AI-2-degrading protein LsrG</shortName>
    </alternativeName>
    <alternativeName>
        <fullName evidence="1">Phospho-(S)-4,5-dihydroxy-2,3-pentanedione isomerase</fullName>
    </alternativeName>
    <alternativeName>
        <fullName evidence="1">Phospho-AI-2 isomerase</fullName>
    </alternativeName>
</protein>